<accession>Q2QQA3</accession>
<accession>Q0IN73</accession>
<accession>Q84L55</accession>
<feature type="chain" id="PRO_0000229902" description="MADS-box transcription factor 20">
    <location>
        <begin position="1"/>
        <end position="233"/>
    </location>
</feature>
<feature type="domain" description="MADS-box" evidence="1">
    <location>
        <begin position="1"/>
        <end position="61"/>
    </location>
</feature>
<feature type="domain" description="K-box" evidence="2">
    <location>
        <begin position="91"/>
        <end position="184"/>
    </location>
</feature>
<feature type="sequence conflict" description="In Ref. 1; AAO92341." evidence="4" ref="1">
    <original>S</original>
    <variation>R</variation>
    <location>
        <position position="95"/>
    </location>
</feature>
<feature type="sequence conflict" description="In Ref. 1; AAO92341." evidence="4" ref="1">
    <original>R</original>
    <variation>K</variation>
    <location>
        <position position="104"/>
    </location>
</feature>
<feature type="sequence conflict" description="In Ref. 1; AAO92341." evidence="4" ref="1">
    <original>N</original>
    <variation>D</variation>
    <location>
        <position position="133"/>
    </location>
</feature>
<feature type="sequence conflict" description="In Ref. 1; AAO92341." evidence="4" ref="1">
    <original>C</original>
    <variation>S</variation>
    <location>
        <position position="170"/>
    </location>
</feature>
<feature type="sequence conflict" description="In Ref. 1; AAO92341." evidence="4" ref="1">
    <original>K</original>
    <variation>E</variation>
    <location>
        <position position="177"/>
    </location>
</feature>
<feature type="sequence conflict" description="In Ref. 1; AAO92341." evidence="4" ref="1">
    <original>T</original>
    <variation>I</variation>
    <location>
        <position position="186"/>
    </location>
</feature>
<evidence type="ECO:0000255" key="1">
    <source>
        <dbReference type="PROSITE-ProRule" id="PRU00251"/>
    </source>
</evidence>
<evidence type="ECO:0000255" key="2">
    <source>
        <dbReference type="PROSITE-ProRule" id="PRU00629"/>
    </source>
</evidence>
<evidence type="ECO:0000269" key="3">
    <source>
    </source>
</evidence>
<evidence type="ECO:0000305" key="4"/>
<name>MAD20_ORYSJ</name>
<reference key="1">
    <citation type="journal article" date="2003" name="Plant Cell Physiol.">
        <title>Systematic reverse genetic screening of T-DNA tagged genes in rice for functional genomic analyses: MADS-box genes as a test case.</title>
        <authorList>
            <person name="Lee S."/>
            <person name="Kim J."/>
            <person name="Son J.-S."/>
            <person name="Nam J."/>
            <person name="Jeong D.-H."/>
            <person name="Lee K."/>
            <person name="Jang S."/>
            <person name="Yoo J."/>
            <person name="Lee J."/>
            <person name="Lee D.-Y."/>
            <person name="Kang H.-G."/>
            <person name="An G."/>
        </authorList>
    </citation>
    <scope>NUCLEOTIDE SEQUENCE [MRNA]</scope>
    <scope>TISSUE SPECIFICITY</scope>
    <source>
        <strain>cv. Dongjin</strain>
        <tissue>Flower</tissue>
    </source>
</reference>
<reference key="2">
    <citation type="journal article" date="2005" name="BMC Biol.">
        <title>The sequence of rice chromosomes 11 and 12, rich in disease resistance genes and recent gene duplications.</title>
        <authorList>
            <consortium name="The rice chromosomes 11 and 12 sequencing consortia"/>
        </authorList>
    </citation>
    <scope>NUCLEOTIDE SEQUENCE [LARGE SCALE GENOMIC DNA]</scope>
    <source>
        <strain>cv. Nipponbare</strain>
    </source>
</reference>
<reference key="3">
    <citation type="journal article" date="2005" name="Nature">
        <title>The map-based sequence of the rice genome.</title>
        <authorList>
            <consortium name="International rice genome sequencing project (IRGSP)"/>
        </authorList>
    </citation>
    <scope>NUCLEOTIDE SEQUENCE [LARGE SCALE GENOMIC DNA]</scope>
    <source>
        <strain>cv. Nipponbare</strain>
    </source>
</reference>
<reference key="4">
    <citation type="journal article" date="2008" name="Nucleic Acids Res.">
        <title>The rice annotation project database (RAP-DB): 2008 update.</title>
        <authorList>
            <consortium name="The rice annotation project (RAP)"/>
        </authorList>
    </citation>
    <scope>GENOME REANNOTATION</scope>
    <source>
        <strain>cv. Nipponbare</strain>
    </source>
</reference>
<reference key="5">
    <citation type="journal article" date="2013" name="Rice">
        <title>Improvement of the Oryza sativa Nipponbare reference genome using next generation sequence and optical map data.</title>
        <authorList>
            <person name="Kawahara Y."/>
            <person name="de la Bastide M."/>
            <person name="Hamilton J.P."/>
            <person name="Kanamori H."/>
            <person name="McCombie W.R."/>
            <person name="Ouyang S."/>
            <person name="Schwartz D.C."/>
            <person name="Tanaka T."/>
            <person name="Wu J."/>
            <person name="Zhou S."/>
            <person name="Childs K.L."/>
            <person name="Davidson R.M."/>
            <person name="Lin H."/>
            <person name="Quesada-Ocampo L."/>
            <person name="Vaillancourt B."/>
            <person name="Sakai H."/>
            <person name="Lee S.S."/>
            <person name="Kim J."/>
            <person name="Numa H."/>
            <person name="Itoh T."/>
            <person name="Buell C.R."/>
            <person name="Matsumoto T."/>
        </authorList>
    </citation>
    <scope>GENOME REANNOTATION</scope>
    <source>
        <strain>cv. Nipponbare</strain>
    </source>
</reference>
<organism>
    <name type="scientific">Oryza sativa subsp. japonica</name>
    <name type="common">Rice</name>
    <dbReference type="NCBI Taxonomy" id="39947"/>
    <lineage>
        <taxon>Eukaryota</taxon>
        <taxon>Viridiplantae</taxon>
        <taxon>Streptophyta</taxon>
        <taxon>Embryophyta</taxon>
        <taxon>Tracheophyta</taxon>
        <taxon>Spermatophyta</taxon>
        <taxon>Magnoliopsida</taxon>
        <taxon>Liliopsida</taxon>
        <taxon>Poales</taxon>
        <taxon>Poaceae</taxon>
        <taxon>BOP clade</taxon>
        <taxon>Oryzoideae</taxon>
        <taxon>Oryzeae</taxon>
        <taxon>Oryzinae</taxon>
        <taxon>Oryza</taxon>
        <taxon>Oryza sativa</taxon>
    </lineage>
</organism>
<keyword id="KW-0238">DNA-binding</keyword>
<keyword id="KW-0539">Nucleus</keyword>
<keyword id="KW-1185">Reference proteome</keyword>
<keyword id="KW-0804">Transcription</keyword>
<keyword id="KW-0805">Transcription regulation</keyword>
<protein>
    <recommendedName>
        <fullName>MADS-box transcription factor 20</fullName>
    </recommendedName>
    <alternativeName>
        <fullName>OsMADS20</fullName>
    </alternativeName>
</protein>
<gene>
    <name type="primary">MADS20</name>
    <name type="ordered locus">Os12g0501700</name>
    <name type="ordered locus">LOC_Os12g31748</name>
</gene>
<proteinExistence type="evidence at transcript level"/>
<dbReference type="EMBL" id="AY250075">
    <property type="protein sequence ID" value="AAO92341.1"/>
    <property type="molecule type" value="mRNA"/>
</dbReference>
<dbReference type="EMBL" id="DP000011">
    <property type="protein sequence ID" value="ABA98632.2"/>
    <property type="status" value="ALT_SEQ"/>
    <property type="molecule type" value="Genomic_DNA"/>
</dbReference>
<dbReference type="EMBL" id="AP008218">
    <property type="protein sequence ID" value="BAF29842.1"/>
    <property type="molecule type" value="Genomic_DNA"/>
</dbReference>
<dbReference type="EMBL" id="AP014968">
    <property type="protein sequence ID" value="BAT17255.1"/>
    <property type="molecule type" value="Genomic_DNA"/>
</dbReference>
<dbReference type="RefSeq" id="XP_015619865.1">
    <property type="nucleotide sequence ID" value="XM_015764379.1"/>
</dbReference>
<dbReference type="SMR" id="Q2QQA3"/>
<dbReference type="FunCoup" id="Q2QQA3">
    <property type="interactions" value="17"/>
</dbReference>
<dbReference type="STRING" id="39947.Q2QQA3"/>
<dbReference type="PaxDb" id="39947-Q2QQA3"/>
<dbReference type="EnsemblPlants" id="Os12t0501700-00">
    <property type="protein sequence ID" value="Os12t0501700-00"/>
    <property type="gene ID" value="Os12g0501700"/>
</dbReference>
<dbReference type="Gramene" id="Os12t0501700-00">
    <property type="protein sequence ID" value="Os12t0501700-00"/>
    <property type="gene ID" value="Os12g0501700"/>
</dbReference>
<dbReference type="KEGG" id="dosa:Os12g0501700"/>
<dbReference type="eggNOG" id="KOG0014">
    <property type="taxonomic scope" value="Eukaryota"/>
</dbReference>
<dbReference type="HOGENOM" id="CLU_053053_0_2_1"/>
<dbReference type="InParanoid" id="Q2QQA3"/>
<dbReference type="OMA" id="SMSYDHI"/>
<dbReference type="OrthoDB" id="1898716at2759"/>
<dbReference type="Proteomes" id="UP000000763">
    <property type="component" value="Chromosome 12"/>
</dbReference>
<dbReference type="Proteomes" id="UP000059680">
    <property type="component" value="Chromosome 12"/>
</dbReference>
<dbReference type="GO" id="GO:0005634">
    <property type="term" value="C:nucleus"/>
    <property type="evidence" value="ECO:0007669"/>
    <property type="project" value="UniProtKB-SubCell"/>
</dbReference>
<dbReference type="GO" id="GO:0000981">
    <property type="term" value="F:DNA-binding transcription factor activity, RNA polymerase II-specific"/>
    <property type="evidence" value="ECO:0000318"/>
    <property type="project" value="GO_Central"/>
</dbReference>
<dbReference type="GO" id="GO:0046983">
    <property type="term" value="F:protein dimerization activity"/>
    <property type="evidence" value="ECO:0007669"/>
    <property type="project" value="InterPro"/>
</dbReference>
<dbReference type="GO" id="GO:0000978">
    <property type="term" value="F:RNA polymerase II cis-regulatory region sequence-specific DNA binding"/>
    <property type="evidence" value="ECO:0000318"/>
    <property type="project" value="GO_Central"/>
</dbReference>
<dbReference type="GO" id="GO:0045944">
    <property type="term" value="P:positive regulation of transcription by RNA polymerase II"/>
    <property type="evidence" value="ECO:0007669"/>
    <property type="project" value="InterPro"/>
</dbReference>
<dbReference type="GO" id="GO:0006357">
    <property type="term" value="P:regulation of transcription by RNA polymerase II"/>
    <property type="evidence" value="ECO:0000318"/>
    <property type="project" value="GO_Central"/>
</dbReference>
<dbReference type="CDD" id="cd00265">
    <property type="entry name" value="MADS_MEF2_like"/>
    <property type="match status" value="1"/>
</dbReference>
<dbReference type="FunFam" id="3.40.1810.10:FF:000003">
    <property type="entry name" value="MADS-box transcription factor MADS-MC"/>
    <property type="match status" value="1"/>
</dbReference>
<dbReference type="Gene3D" id="3.40.1810.10">
    <property type="entry name" value="Transcription factor, MADS-box"/>
    <property type="match status" value="1"/>
</dbReference>
<dbReference type="InterPro" id="IPR050142">
    <property type="entry name" value="MADS-box/MEF2_TF"/>
</dbReference>
<dbReference type="InterPro" id="IPR033896">
    <property type="entry name" value="MEF2-like_N"/>
</dbReference>
<dbReference type="InterPro" id="IPR002487">
    <property type="entry name" value="TF_Kbox"/>
</dbReference>
<dbReference type="InterPro" id="IPR002100">
    <property type="entry name" value="TF_MADSbox"/>
</dbReference>
<dbReference type="InterPro" id="IPR036879">
    <property type="entry name" value="TF_MADSbox_sf"/>
</dbReference>
<dbReference type="PANTHER" id="PTHR48019">
    <property type="entry name" value="SERUM RESPONSE FACTOR HOMOLOG"/>
    <property type="match status" value="1"/>
</dbReference>
<dbReference type="Pfam" id="PF01486">
    <property type="entry name" value="K-box"/>
    <property type="match status" value="1"/>
</dbReference>
<dbReference type="Pfam" id="PF00319">
    <property type="entry name" value="SRF-TF"/>
    <property type="match status" value="1"/>
</dbReference>
<dbReference type="PRINTS" id="PR00404">
    <property type="entry name" value="MADSDOMAIN"/>
</dbReference>
<dbReference type="SMART" id="SM00432">
    <property type="entry name" value="MADS"/>
    <property type="match status" value="1"/>
</dbReference>
<dbReference type="SUPFAM" id="SSF55455">
    <property type="entry name" value="SRF-like"/>
    <property type="match status" value="1"/>
</dbReference>
<dbReference type="PROSITE" id="PS51297">
    <property type="entry name" value="K_BOX"/>
    <property type="match status" value="1"/>
</dbReference>
<dbReference type="PROSITE" id="PS50066">
    <property type="entry name" value="MADS_BOX_2"/>
    <property type="match status" value="1"/>
</dbReference>
<sequence>MGRGKVQVRRIENEVSRQVTFSKRRPGLLKKAHEIAVLCDVDVAAIVFSAKGNLFHYASSHTTMERILEKYDRHELLSEGNNVIEEFPELEGSMSYDHIKLRGRIEALKKSQRNLMGQELDSLTLQDIQQLENQIDTSLNNIRSRKEKLLMEKNTILEKKITELETLHTCIRASPTKAAAPPACNTADAFVPNLNICCGDSGEPETVTAPLGWTSSNNGLPWWMLQSSSNGKS</sequence>
<comment type="function">
    <text>Probable transcription factor.</text>
</comment>
<comment type="subcellular location">
    <subcellularLocation>
        <location evidence="4">Nucleus</location>
    </subcellularLocation>
</comment>
<comment type="tissue specificity">
    <text evidence="3">Expressed in developing seeds and seedling shoots.</text>
</comment>
<comment type="sequence caution" evidence="4">
    <conflict type="erroneous gene model prediction">
        <sequence resource="EMBL-CDS" id="ABA98632"/>
    </conflict>
</comment>